<accession>Q9DET5</accession>
<sequence>MCDKPDLSEVEKFDKKKLKKTNTEEKNTLPSKETIEQEKECVKSS</sequence>
<dbReference type="EMBL" id="AJ301650">
    <property type="protein sequence ID" value="CAC17010.1"/>
    <property type="molecule type" value="mRNA"/>
</dbReference>
<dbReference type="RefSeq" id="XP_015715596.1">
    <property type="nucleotide sequence ID" value="XM_015860110.1"/>
</dbReference>
<dbReference type="SMR" id="Q9DET5"/>
<dbReference type="Ensembl" id="ENSCJPT00005017927.1">
    <property type="protein sequence ID" value="ENSCJPP00005012367.1"/>
    <property type="gene ID" value="ENSCJPG00005010515.1"/>
</dbReference>
<dbReference type="GeneID" id="107312570"/>
<dbReference type="KEGG" id="cjo:107312570"/>
<dbReference type="CTD" id="286527"/>
<dbReference type="GeneTree" id="ENSGT00940000161604"/>
<dbReference type="Proteomes" id="UP000694412">
    <property type="component" value="Chromosome 4"/>
</dbReference>
<dbReference type="GO" id="GO:0005737">
    <property type="term" value="C:cytoplasm"/>
    <property type="evidence" value="ECO:0007669"/>
    <property type="project" value="UniProtKB-KW"/>
</dbReference>
<dbReference type="GO" id="GO:0005856">
    <property type="term" value="C:cytoskeleton"/>
    <property type="evidence" value="ECO:0007669"/>
    <property type="project" value="UniProtKB-SubCell"/>
</dbReference>
<dbReference type="GO" id="GO:0003785">
    <property type="term" value="F:actin monomer binding"/>
    <property type="evidence" value="ECO:0007669"/>
    <property type="project" value="InterPro"/>
</dbReference>
<dbReference type="GO" id="GO:0007015">
    <property type="term" value="P:actin filament organization"/>
    <property type="evidence" value="ECO:0007669"/>
    <property type="project" value="InterPro"/>
</dbReference>
<dbReference type="GO" id="GO:0030334">
    <property type="term" value="P:regulation of cell migration"/>
    <property type="evidence" value="ECO:0007669"/>
    <property type="project" value="TreeGrafter"/>
</dbReference>
<dbReference type="FunFam" id="1.20.5.520:FF:000001">
    <property type="entry name" value="Thymosin beta"/>
    <property type="match status" value="1"/>
</dbReference>
<dbReference type="Gene3D" id="1.20.5.520">
    <property type="entry name" value="Single helix bin"/>
    <property type="match status" value="1"/>
</dbReference>
<dbReference type="InterPro" id="IPR001152">
    <property type="entry name" value="Beta-thymosin"/>
</dbReference>
<dbReference type="InterPro" id="IPR038386">
    <property type="entry name" value="Beta-thymosin_sf"/>
</dbReference>
<dbReference type="PANTHER" id="PTHR12021">
    <property type="entry name" value="THYMOSIN BETA"/>
    <property type="match status" value="1"/>
</dbReference>
<dbReference type="PANTHER" id="PTHR12021:SF11">
    <property type="entry name" value="THYMOSIN BETA-15A-RELATED"/>
    <property type="match status" value="1"/>
</dbReference>
<dbReference type="Pfam" id="PF01290">
    <property type="entry name" value="Thymosin"/>
    <property type="match status" value="1"/>
</dbReference>
<dbReference type="PIRSF" id="PIRSF001828">
    <property type="entry name" value="Thymosin_beta"/>
    <property type="match status" value="1"/>
</dbReference>
<dbReference type="SMART" id="SM00152">
    <property type="entry name" value="THY"/>
    <property type="match status" value="1"/>
</dbReference>
<dbReference type="PROSITE" id="PS00500">
    <property type="entry name" value="THYMOSIN_B4"/>
    <property type="match status" value="1"/>
</dbReference>
<name>TB15A_COTJA</name>
<proteinExistence type="inferred from homology"/>
<feature type="initiator methionine" description="Removed" evidence="1">
    <location>
        <position position="1"/>
    </location>
</feature>
<feature type="chain" id="PRO_0000185160" description="Thymosin beta-15A homolog">
    <location>
        <begin position="2"/>
        <end position="45"/>
    </location>
</feature>
<feature type="region of interest" description="Disordered" evidence="2">
    <location>
        <begin position="19"/>
        <end position="45"/>
    </location>
</feature>
<feature type="compositionally biased region" description="Basic and acidic residues" evidence="2">
    <location>
        <begin position="21"/>
        <end position="45"/>
    </location>
</feature>
<evidence type="ECO:0000250" key="1"/>
<evidence type="ECO:0000256" key="2">
    <source>
        <dbReference type="SAM" id="MobiDB-lite"/>
    </source>
</evidence>
<evidence type="ECO:0000305" key="3"/>
<protein>
    <recommendedName>
        <fullName>Thymosin beta-15A homolog</fullName>
    </recommendedName>
    <alternativeName>
        <fullName>Thymosin beta</fullName>
    </alternativeName>
</protein>
<comment type="function">
    <text evidence="1">Plays an important role in the organization of the cytoskeleton. Binds to and sequesters actin monomers (G actin) and therefore inhibits actin polymerization (By similarity).</text>
</comment>
<comment type="subcellular location">
    <subcellularLocation>
        <location evidence="1">Cytoplasm</location>
        <location evidence="1">Cytoskeleton</location>
    </subcellularLocation>
</comment>
<comment type="similarity">
    <text evidence="3">Belongs to the thymosin beta family.</text>
</comment>
<reference key="1">
    <citation type="submission" date="2000-11" db="EMBL/GenBank/DDBJ databases">
        <authorList>
            <person name="Dathe V.E."/>
            <person name="Prols F."/>
            <person name="Brand-Saberi B."/>
        </authorList>
    </citation>
    <scope>NUCLEOTIDE SEQUENCE [MRNA]</scope>
</reference>
<organism>
    <name type="scientific">Coturnix japonica</name>
    <name type="common">Japanese quail</name>
    <name type="synonym">Coturnix coturnix japonica</name>
    <dbReference type="NCBI Taxonomy" id="93934"/>
    <lineage>
        <taxon>Eukaryota</taxon>
        <taxon>Metazoa</taxon>
        <taxon>Chordata</taxon>
        <taxon>Craniata</taxon>
        <taxon>Vertebrata</taxon>
        <taxon>Euteleostomi</taxon>
        <taxon>Archelosauria</taxon>
        <taxon>Archosauria</taxon>
        <taxon>Dinosauria</taxon>
        <taxon>Saurischia</taxon>
        <taxon>Theropoda</taxon>
        <taxon>Coelurosauria</taxon>
        <taxon>Aves</taxon>
        <taxon>Neognathae</taxon>
        <taxon>Galloanserae</taxon>
        <taxon>Galliformes</taxon>
        <taxon>Phasianidae</taxon>
        <taxon>Perdicinae</taxon>
        <taxon>Coturnix</taxon>
    </lineage>
</organism>
<keyword id="KW-0009">Actin-binding</keyword>
<keyword id="KW-0963">Cytoplasm</keyword>
<keyword id="KW-0206">Cytoskeleton</keyword>
<keyword id="KW-1185">Reference proteome</keyword>